<dbReference type="EC" id="2.7.1.71" evidence="1"/>
<dbReference type="EMBL" id="AE017180">
    <property type="protein sequence ID" value="AAR35402.2"/>
    <property type="molecule type" value="Genomic_DNA"/>
</dbReference>
<dbReference type="RefSeq" id="NP_953075.2">
    <property type="nucleotide sequence ID" value="NC_002939.5"/>
</dbReference>
<dbReference type="RefSeq" id="WP_010942669.1">
    <property type="nucleotide sequence ID" value="NC_002939.5"/>
</dbReference>
<dbReference type="SMR" id="Q74BL5"/>
<dbReference type="FunCoup" id="Q74BL5">
    <property type="interactions" value="571"/>
</dbReference>
<dbReference type="STRING" id="243231.GSU2026"/>
<dbReference type="EnsemblBacteria" id="AAR35402">
    <property type="protein sequence ID" value="AAR35402"/>
    <property type="gene ID" value="GSU2026"/>
</dbReference>
<dbReference type="KEGG" id="gsu:GSU2026"/>
<dbReference type="PATRIC" id="fig|243231.5.peg.2062"/>
<dbReference type="eggNOG" id="COG0703">
    <property type="taxonomic scope" value="Bacteria"/>
</dbReference>
<dbReference type="HOGENOM" id="CLU_057607_4_0_7"/>
<dbReference type="InParanoid" id="Q74BL5"/>
<dbReference type="OrthoDB" id="9800332at2"/>
<dbReference type="UniPathway" id="UPA00053">
    <property type="reaction ID" value="UER00088"/>
</dbReference>
<dbReference type="Proteomes" id="UP000000577">
    <property type="component" value="Chromosome"/>
</dbReference>
<dbReference type="GO" id="GO:0005829">
    <property type="term" value="C:cytosol"/>
    <property type="evidence" value="ECO:0000318"/>
    <property type="project" value="GO_Central"/>
</dbReference>
<dbReference type="GO" id="GO:0005524">
    <property type="term" value="F:ATP binding"/>
    <property type="evidence" value="ECO:0007669"/>
    <property type="project" value="UniProtKB-UniRule"/>
</dbReference>
<dbReference type="GO" id="GO:0000287">
    <property type="term" value="F:magnesium ion binding"/>
    <property type="evidence" value="ECO:0007669"/>
    <property type="project" value="UniProtKB-UniRule"/>
</dbReference>
<dbReference type="GO" id="GO:0004765">
    <property type="term" value="F:shikimate kinase activity"/>
    <property type="evidence" value="ECO:0000318"/>
    <property type="project" value="GO_Central"/>
</dbReference>
<dbReference type="GO" id="GO:0008652">
    <property type="term" value="P:amino acid biosynthetic process"/>
    <property type="evidence" value="ECO:0007669"/>
    <property type="project" value="UniProtKB-KW"/>
</dbReference>
<dbReference type="GO" id="GO:0009073">
    <property type="term" value="P:aromatic amino acid family biosynthetic process"/>
    <property type="evidence" value="ECO:0007669"/>
    <property type="project" value="UniProtKB-KW"/>
</dbReference>
<dbReference type="GO" id="GO:0009423">
    <property type="term" value="P:chorismate biosynthetic process"/>
    <property type="evidence" value="ECO:0007669"/>
    <property type="project" value="UniProtKB-UniRule"/>
</dbReference>
<dbReference type="CDD" id="cd00464">
    <property type="entry name" value="SK"/>
    <property type="match status" value="1"/>
</dbReference>
<dbReference type="Gene3D" id="3.40.50.300">
    <property type="entry name" value="P-loop containing nucleotide triphosphate hydrolases"/>
    <property type="match status" value="1"/>
</dbReference>
<dbReference type="HAMAP" id="MF_00109">
    <property type="entry name" value="Shikimate_kinase"/>
    <property type="match status" value="1"/>
</dbReference>
<dbReference type="InterPro" id="IPR027417">
    <property type="entry name" value="P-loop_NTPase"/>
</dbReference>
<dbReference type="InterPro" id="IPR031322">
    <property type="entry name" value="Shikimate/glucono_kinase"/>
</dbReference>
<dbReference type="InterPro" id="IPR000623">
    <property type="entry name" value="Shikimate_kinase/TSH1"/>
</dbReference>
<dbReference type="InterPro" id="IPR023000">
    <property type="entry name" value="Shikimate_kinase_CS"/>
</dbReference>
<dbReference type="PANTHER" id="PTHR21087">
    <property type="entry name" value="SHIKIMATE KINASE"/>
    <property type="match status" value="1"/>
</dbReference>
<dbReference type="PANTHER" id="PTHR21087:SF16">
    <property type="entry name" value="SHIKIMATE KINASE 1, CHLOROPLASTIC"/>
    <property type="match status" value="1"/>
</dbReference>
<dbReference type="Pfam" id="PF01202">
    <property type="entry name" value="SKI"/>
    <property type="match status" value="1"/>
</dbReference>
<dbReference type="PRINTS" id="PR01100">
    <property type="entry name" value="SHIKIMTKNASE"/>
</dbReference>
<dbReference type="SUPFAM" id="SSF52540">
    <property type="entry name" value="P-loop containing nucleoside triphosphate hydrolases"/>
    <property type="match status" value="1"/>
</dbReference>
<dbReference type="PROSITE" id="PS01128">
    <property type="entry name" value="SHIKIMATE_KINASE"/>
    <property type="match status" value="1"/>
</dbReference>
<sequence>MRGTWSMSVPSDGRNVVLTGFMGTGKSTVGKLLARRLGYRFSDLDALIVERAGISINEIFERYGEQRFRELETEAIRSLGGVSGRVVATGGGAVIAPRNRVLLREAGLVVNLTASLEVILSRLKGDRERPLLKSNNTPEALAALMTARENAYADADLRIDTAGKSVEDVVTEIATFVREHQ</sequence>
<reference key="1">
    <citation type="journal article" date="2003" name="Science">
        <title>Genome of Geobacter sulfurreducens: metal reduction in subsurface environments.</title>
        <authorList>
            <person name="Methe B.A."/>
            <person name="Nelson K.E."/>
            <person name="Eisen J.A."/>
            <person name="Paulsen I.T."/>
            <person name="Nelson W.C."/>
            <person name="Heidelberg J.F."/>
            <person name="Wu D."/>
            <person name="Wu M."/>
            <person name="Ward N.L."/>
            <person name="Beanan M.J."/>
            <person name="Dodson R.J."/>
            <person name="Madupu R."/>
            <person name="Brinkac L.M."/>
            <person name="Daugherty S.C."/>
            <person name="DeBoy R.T."/>
            <person name="Durkin A.S."/>
            <person name="Gwinn M.L."/>
            <person name="Kolonay J.F."/>
            <person name="Sullivan S.A."/>
            <person name="Haft D.H."/>
            <person name="Selengut J."/>
            <person name="Davidsen T.M."/>
            <person name="Zafar N."/>
            <person name="White O."/>
            <person name="Tran B."/>
            <person name="Romero C."/>
            <person name="Forberger H.A."/>
            <person name="Weidman J.F."/>
            <person name="Khouri H.M."/>
            <person name="Feldblyum T.V."/>
            <person name="Utterback T.R."/>
            <person name="Van Aken S.E."/>
            <person name="Lovley D.R."/>
            <person name="Fraser C.M."/>
        </authorList>
    </citation>
    <scope>NUCLEOTIDE SEQUENCE [LARGE SCALE GENOMIC DNA]</scope>
    <source>
        <strain>ATCC 51573 / DSM 12127 / PCA</strain>
    </source>
</reference>
<accession>Q74BL5</accession>
<evidence type="ECO:0000255" key="1">
    <source>
        <dbReference type="HAMAP-Rule" id="MF_00109"/>
    </source>
</evidence>
<keyword id="KW-0028">Amino-acid biosynthesis</keyword>
<keyword id="KW-0057">Aromatic amino acid biosynthesis</keyword>
<keyword id="KW-0067">ATP-binding</keyword>
<keyword id="KW-0963">Cytoplasm</keyword>
<keyword id="KW-0418">Kinase</keyword>
<keyword id="KW-0460">Magnesium</keyword>
<keyword id="KW-0479">Metal-binding</keyword>
<keyword id="KW-0547">Nucleotide-binding</keyword>
<keyword id="KW-1185">Reference proteome</keyword>
<keyword id="KW-0808">Transferase</keyword>
<proteinExistence type="inferred from homology"/>
<organism>
    <name type="scientific">Geobacter sulfurreducens (strain ATCC 51573 / DSM 12127 / PCA)</name>
    <dbReference type="NCBI Taxonomy" id="243231"/>
    <lineage>
        <taxon>Bacteria</taxon>
        <taxon>Pseudomonadati</taxon>
        <taxon>Thermodesulfobacteriota</taxon>
        <taxon>Desulfuromonadia</taxon>
        <taxon>Geobacterales</taxon>
        <taxon>Geobacteraceae</taxon>
        <taxon>Geobacter</taxon>
    </lineage>
</organism>
<gene>
    <name evidence="1" type="primary">aroK</name>
    <name type="ordered locus">GSU2026</name>
</gene>
<name>AROK_GEOSL</name>
<comment type="function">
    <text evidence="1">Catalyzes the specific phosphorylation of the 3-hydroxyl group of shikimic acid using ATP as a cosubstrate.</text>
</comment>
<comment type="catalytic activity">
    <reaction evidence="1">
        <text>shikimate + ATP = 3-phosphoshikimate + ADP + H(+)</text>
        <dbReference type="Rhea" id="RHEA:13121"/>
        <dbReference type="ChEBI" id="CHEBI:15378"/>
        <dbReference type="ChEBI" id="CHEBI:30616"/>
        <dbReference type="ChEBI" id="CHEBI:36208"/>
        <dbReference type="ChEBI" id="CHEBI:145989"/>
        <dbReference type="ChEBI" id="CHEBI:456216"/>
        <dbReference type="EC" id="2.7.1.71"/>
    </reaction>
</comment>
<comment type="cofactor">
    <cofactor evidence="1">
        <name>Mg(2+)</name>
        <dbReference type="ChEBI" id="CHEBI:18420"/>
    </cofactor>
    <text evidence="1">Binds 1 Mg(2+) ion per subunit.</text>
</comment>
<comment type="pathway">
    <text evidence="1">Metabolic intermediate biosynthesis; chorismate biosynthesis; chorismate from D-erythrose 4-phosphate and phosphoenolpyruvate: step 5/7.</text>
</comment>
<comment type="subunit">
    <text evidence="1">Monomer.</text>
</comment>
<comment type="subcellular location">
    <subcellularLocation>
        <location evidence="1">Cytoplasm</location>
    </subcellularLocation>
</comment>
<comment type="similarity">
    <text evidence="1">Belongs to the shikimate kinase family.</text>
</comment>
<protein>
    <recommendedName>
        <fullName evidence="1">Shikimate kinase</fullName>
        <shortName evidence="1">SK</shortName>
        <ecNumber evidence="1">2.7.1.71</ecNumber>
    </recommendedName>
</protein>
<feature type="chain" id="PRO_0000237884" description="Shikimate kinase">
    <location>
        <begin position="1"/>
        <end position="181"/>
    </location>
</feature>
<feature type="binding site" evidence="1">
    <location>
        <begin position="23"/>
        <end position="28"/>
    </location>
    <ligand>
        <name>ATP</name>
        <dbReference type="ChEBI" id="CHEBI:30616"/>
    </ligand>
</feature>
<feature type="binding site" evidence="1">
    <location>
        <position position="27"/>
    </location>
    <ligand>
        <name>Mg(2+)</name>
        <dbReference type="ChEBI" id="CHEBI:18420"/>
    </ligand>
</feature>
<feature type="binding site" evidence="1">
    <location>
        <position position="45"/>
    </location>
    <ligand>
        <name>substrate</name>
    </ligand>
</feature>
<feature type="binding site" evidence="1">
    <location>
        <position position="69"/>
    </location>
    <ligand>
        <name>substrate</name>
    </ligand>
</feature>
<feature type="binding site" evidence="1">
    <location>
        <position position="91"/>
    </location>
    <ligand>
        <name>substrate</name>
    </ligand>
</feature>
<feature type="binding site" evidence="1">
    <location>
        <position position="129"/>
    </location>
    <ligand>
        <name>ATP</name>
        <dbReference type="ChEBI" id="CHEBI:30616"/>
    </ligand>
</feature>
<feature type="binding site" evidence="1">
    <location>
        <position position="148"/>
    </location>
    <ligand>
        <name>substrate</name>
    </ligand>
</feature>